<proteinExistence type="inferred from homology"/>
<dbReference type="EC" id="2.1.3.15" evidence="1"/>
<dbReference type="EMBL" id="AP009351">
    <property type="protein sequence ID" value="BAF67867.1"/>
    <property type="molecule type" value="Genomic_DNA"/>
</dbReference>
<dbReference type="RefSeq" id="WP_000471564.1">
    <property type="nucleotide sequence ID" value="NZ_JBBIAE010000009.1"/>
</dbReference>
<dbReference type="SMR" id="A6QHN5"/>
<dbReference type="KEGG" id="sae:NWMN_1595"/>
<dbReference type="HOGENOM" id="CLU_015486_1_0_9"/>
<dbReference type="UniPathway" id="UPA00655">
    <property type="reaction ID" value="UER00711"/>
</dbReference>
<dbReference type="Proteomes" id="UP000006386">
    <property type="component" value="Chromosome"/>
</dbReference>
<dbReference type="GO" id="GO:0009317">
    <property type="term" value="C:acetyl-CoA carboxylase complex"/>
    <property type="evidence" value="ECO:0007669"/>
    <property type="project" value="InterPro"/>
</dbReference>
<dbReference type="GO" id="GO:0003989">
    <property type="term" value="F:acetyl-CoA carboxylase activity"/>
    <property type="evidence" value="ECO:0007669"/>
    <property type="project" value="InterPro"/>
</dbReference>
<dbReference type="GO" id="GO:0005524">
    <property type="term" value="F:ATP binding"/>
    <property type="evidence" value="ECO:0007669"/>
    <property type="project" value="UniProtKB-KW"/>
</dbReference>
<dbReference type="GO" id="GO:0016743">
    <property type="term" value="F:carboxyl- or carbamoyltransferase activity"/>
    <property type="evidence" value="ECO:0007669"/>
    <property type="project" value="UniProtKB-UniRule"/>
</dbReference>
<dbReference type="GO" id="GO:0008270">
    <property type="term" value="F:zinc ion binding"/>
    <property type="evidence" value="ECO:0007669"/>
    <property type="project" value="UniProtKB-UniRule"/>
</dbReference>
<dbReference type="GO" id="GO:0006633">
    <property type="term" value="P:fatty acid biosynthetic process"/>
    <property type="evidence" value="ECO:0007669"/>
    <property type="project" value="UniProtKB-KW"/>
</dbReference>
<dbReference type="GO" id="GO:2001295">
    <property type="term" value="P:malonyl-CoA biosynthetic process"/>
    <property type="evidence" value="ECO:0007669"/>
    <property type="project" value="UniProtKB-UniRule"/>
</dbReference>
<dbReference type="Gene3D" id="3.90.226.10">
    <property type="entry name" value="2-enoyl-CoA Hydratase, Chain A, domain 1"/>
    <property type="match status" value="1"/>
</dbReference>
<dbReference type="HAMAP" id="MF_01395">
    <property type="entry name" value="AcetylCoA_CT_beta"/>
    <property type="match status" value="1"/>
</dbReference>
<dbReference type="InterPro" id="IPR034733">
    <property type="entry name" value="AcCoA_carboxyl_beta"/>
</dbReference>
<dbReference type="InterPro" id="IPR000438">
    <property type="entry name" value="Acetyl_CoA_COase_Trfase_b_su"/>
</dbReference>
<dbReference type="InterPro" id="IPR029045">
    <property type="entry name" value="ClpP/crotonase-like_dom_sf"/>
</dbReference>
<dbReference type="InterPro" id="IPR011762">
    <property type="entry name" value="COA_CT_N"/>
</dbReference>
<dbReference type="InterPro" id="IPR041010">
    <property type="entry name" value="Znf-ACC"/>
</dbReference>
<dbReference type="NCBIfam" id="TIGR00515">
    <property type="entry name" value="accD"/>
    <property type="match status" value="1"/>
</dbReference>
<dbReference type="PANTHER" id="PTHR42995">
    <property type="entry name" value="ACETYL-COENZYME A CARBOXYLASE CARBOXYL TRANSFERASE SUBUNIT BETA, CHLOROPLASTIC"/>
    <property type="match status" value="1"/>
</dbReference>
<dbReference type="PANTHER" id="PTHR42995:SF5">
    <property type="entry name" value="ACETYL-COENZYME A CARBOXYLASE CARBOXYL TRANSFERASE SUBUNIT BETA, CHLOROPLASTIC"/>
    <property type="match status" value="1"/>
</dbReference>
<dbReference type="Pfam" id="PF01039">
    <property type="entry name" value="Carboxyl_trans"/>
    <property type="match status" value="1"/>
</dbReference>
<dbReference type="Pfam" id="PF17848">
    <property type="entry name" value="Zn_ribbon_ACC"/>
    <property type="match status" value="1"/>
</dbReference>
<dbReference type="PRINTS" id="PR01070">
    <property type="entry name" value="ACCCTRFRASEB"/>
</dbReference>
<dbReference type="SUPFAM" id="SSF52096">
    <property type="entry name" value="ClpP/crotonase"/>
    <property type="match status" value="1"/>
</dbReference>
<dbReference type="PROSITE" id="PS50980">
    <property type="entry name" value="COA_CT_NTER"/>
    <property type="match status" value="1"/>
</dbReference>
<reference key="1">
    <citation type="journal article" date="2008" name="J. Bacteriol.">
        <title>Genome sequence of Staphylococcus aureus strain Newman and comparative analysis of staphylococcal genomes: polymorphism and evolution of two major pathogenicity islands.</title>
        <authorList>
            <person name="Baba T."/>
            <person name="Bae T."/>
            <person name="Schneewind O."/>
            <person name="Takeuchi F."/>
            <person name="Hiramatsu K."/>
        </authorList>
    </citation>
    <scope>NUCLEOTIDE SEQUENCE [LARGE SCALE GENOMIC DNA]</scope>
    <source>
        <strain>Newman</strain>
    </source>
</reference>
<gene>
    <name evidence="1" type="primary">accD</name>
    <name type="ordered locus">NWMN_1595</name>
</gene>
<keyword id="KW-0067">ATP-binding</keyword>
<keyword id="KW-0963">Cytoplasm</keyword>
<keyword id="KW-0275">Fatty acid biosynthesis</keyword>
<keyword id="KW-0276">Fatty acid metabolism</keyword>
<keyword id="KW-0444">Lipid biosynthesis</keyword>
<keyword id="KW-0443">Lipid metabolism</keyword>
<keyword id="KW-0479">Metal-binding</keyword>
<keyword id="KW-0547">Nucleotide-binding</keyword>
<keyword id="KW-0808">Transferase</keyword>
<keyword id="KW-0862">Zinc</keyword>
<keyword id="KW-0863">Zinc-finger</keyword>
<sequence length="285" mass="31886">MFKDFFNRTKKKKYLTVQDSKNKDVPAGIMTKCPKCKKIMYTKELAENLNVCFNCDHHIALTAYKRIEAISDEGSFTEFDKGMTSANPLDFPSYLEKIEKDQQKTGLKEAVVTGTAQLDGMKFGVAVMDSRFRMGSMGSVIGEKICRIIDYCTENRLPFILFSASGGARMQEGIISLMQMGKTSVSLKRHSDAGLLYISYLTHPTTGGVSASFASVGDINLSEPKALIGFAGRRVIEQTINEKLPDDFQTAEFLLEHGQLDKVVHRNDMRQTLSEILKIHQEVTK</sequence>
<name>ACCD_STAAE</name>
<accession>A6QHN5</accession>
<feature type="chain" id="PRO_0000389858" description="Acetyl-coenzyme A carboxylase carboxyl transferase subunit beta">
    <location>
        <begin position="1"/>
        <end position="285"/>
    </location>
</feature>
<feature type="domain" description="CoA carboxyltransferase N-terminal" evidence="2">
    <location>
        <begin position="29"/>
        <end position="285"/>
    </location>
</feature>
<feature type="zinc finger region" description="C4-type" evidence="1">
    <location>
        <begin position="33"/>
        <end position="55"/>
    </location>
</feature>
<feature type="binding site" evidence="1">
    <location>
        <position position="33"/>
    </location>
    <ligand>
        <name>Zn(2+)</name>
        <dbReference type="ChEBI" id="CHEBI:29105"/>
    </ligand>
</feature>
<feature type="binding site" evidence="1">
    <location>
        <position position="36"/>
    </location>
    <ligand>
        <name>Zn(2+)</name>
        <dbReference type="ChEBI" id="CHEBI:29105"/>
    </ligand>
</feature>
<feature type="binding site" evidence="1">
    <location>
        <position position="52"/>
    </location>
    <ligand>
        <name>Zn(2+)</name>
        <dbReference type="ChEBI" id="CHEBI:29105"/>
    </ligand>
</feature>
<feature type="binding site" evidence="1">
    <location>
        <position position="55"/>
    </location>
    <ligand>
        <name>Zn(2+)</name>
        <dbReference type="ChEBI" id="CHEBI:29105"/>
    </ligand>
</feature>
<protein>
    <recommendedName>
        <fullName evidence="1">Acetyl-coenzyme A carboxylase carboxyl transferase subunit beta</fullName>
        <shortName evidence="1">ACCase subunit beta</shortName>
        <shortName evidence="1">Acetyl-CoA carboxylase carboxyltransferase subunit beta</shortName>
        <ecNumber evidence="1">2.1.3.15</ecNumber>
    </recommendedName>
</protein>
<organism>
    <name type="scientific">Staphylococcus aureus (strain Newman)</name>
    <dbReference type="NCBI Taxonomy" id="426430"/>
    <lineage>
        <taxon>Bacteria</taxon>
        <taxon>Bacillati</taxon>
        <taxon>Bacillota</taxon>
        <taxon>Bacilli</taxon>
        <taxon>Bacillales</taxon>
        <taxon>Staphylococcaceae</taxon>
        <taxon>Staphylococcus</taxon>
    </lineage>
</organism>
<evidence type="ECO:0000255" key="1">
    <source>
        <dbReference type="HAMAP-Rule" id="MF_01395"/>
    </source>
</evidence>
<evidence type="ECO:0000255" key="2">
    <source>
        <dbReference type="PROSITE-ProRule" id="PRU01136"/>
    </source>
</evidence>
<comment type="function">
    <text evidence="1">Component of the acetyl coenzyme A carboxylase (ACC) complex. Biotin carboxylase (BC) catalyzes the carboxylation of biotin on its carrier protein (BCCP) and then the CO(2) group is transferred by the transcarboxylase to acetyl-CoA to form malonyl-CoA.</text>
</comment>
<comment type="catalytic activity">
    <reaction evidence="1">
        <text>N(6)-carboxybiotinyl-L-lysyl-[protein] + acetyl-CoA = N(6)-biotinyl-L-lysyl-[protein] + malonyl-CoA</text>
        <dbReference type="Rhea" id="RHEA:54728"/>
        <dbReference type="Rhea" id="RHEA-COMP:10505"/>
        <dbReference type="Rhea" id="RHEA-COMP:10506"/>
        <dbReference type="ChEBI" id="CHEBI:57288"/>
        <dbReference type="ChEBI" id="CHEBI:57384"/>
        <dbReference type="ChEBI" id="CHEBI:83144"/>
        <dbReference type="ChEBI" id="CHEBI:83145"/>
        <dbReference type="EC" id="2.1.3.15"/>
    </reaction>
</comment>
<comment type="cofactor">
    <cofactor evidence="1">
        <name>Zn(2+)</name>
        <dbReference type="ChEBI" id="CHEBI:29105"/>
    </cofactor>
    <text evidence="1">Binds 1 zinc ion per subunit.</text>
</comment>
<comment type="pathway">
    <text evidence="1">Lipid metabolism; malonyl-CoA biosynthesis; malonyl-CoA from acetyl-CoA: step 1/1.</text>
</comment>
<comment type="subunit">
    <text evidence="1">Acetyl-CoA carboxylase is a heterohexamer composed of biotin carboxyl carrier protein (AccB), biotin carboxylase (AccC) and two subunits each of ACCase subunit alpha (AccA) and ACCase subunit beta (AccD).</text>
</comment>
<comment type="subcellular location">
    <subcellularLocation>
        <location evidence="1">Cytoplasm</location>
    </subcellularLocation>
</comment>
<comment type="similarity">
    <text evidence="1">Belongs to the AccD/PCCB family.</text>
</comment>